<reference key="1">
    <citation type="submission" date="2006-03" db="EMBL/GenBank/DDBJ databases">
        <title>Complete sequence of Rhodopseudomonas palustris BisB5.</title>
        <authorList>
            <consortium name="US DOE Joint Genome Institute"/>
            <person name="Copeland A."/>
            <person name="Lucas S."/>
            <person name="Lapidus A."/>
            <person name="Barry K."/>
            <person name="Detter J.C."/>
            <person name="Glavina del Rio T."/>
            <person name="Hammon N."/>
            <person name="Israni S."/>
            <person name="Dalin E."/>
            <person name="Tice H."/>
            <person name="Pitluck S."/>
            <person name="Chain P."/>
            <person name="Malfatti S."/>
            <person name="Shin M."/>
            <person name="Vergez L."/>
            <person name="Schmutz J."/>
            <person name="Larimer F."/>
            <person name="Land M."/>
            <person name="Hauser L."/>
            <person name="Pelletier D.A."/>
            <person name="Kyrpides N."/>
            <person name="Lykidis A."/>
            <person name="Oda Y."/>
            <person name="Harwood C.S."/>
            <person name="Richardson P."/>
        </authorList>
    </citation>
    <scope>NUCLEOTIDE SEQUENCE [LARGE SCALE GENOMIC DNA]</scope>
    <source>
        <strain>BisB5</strain>
    </source>
</reference>
<organism>
    <name type="scientific">Rhodopseudomonas palustris (strain BisB5)</name>
    <dbReference type="NCBI Taxonomy" id="316057"/>
    <lineage>
        <taxon>Bacteria</taxon>
        <taxon>Pseudomonadati</taxon>
        <taxon>Pseudomonadota</taxon>
        <taxon>Alphaproteobacteria</taxon>
        <taxon>Hyphomicrobiales</taxon>
        <taxon>Nitrobacteraceae</taxon>
        <taxon>Rhodopseudomonas</taxon>
    </lineage>
</organism>
<evidence type="ECO:0000255" key="1">
    <source>
        <dbReference type="HAMAP-Rule" id="MF_01328"/>
    </source>
</evidence>
<evidence type="ECO:0000305" key="2"/>
<sequence length="206" mass="22163">MELKVTTLEGKEAGSVQLSDAIFGLEPRQDIVQRCVIWQLAKRQAGTHKAKGRAEIWRTGKKMYKQKGTGGARHGSQRVPQFRGGGRAFGPVVRSHAIDLPKKVRALALRHALSAKAKGGGLIVIDKAELEAAKTKALVGAFSGLGLTNALIIDGAEVNNGFATAARNIPNIDVLPVQGINVYDIVRRRKLVLTKAALDALEARFK</sequence>
<feature type="chain" id="PRO_1000052480" description="Large ribosomal subunit protein uL4">
    <location>
        <begin position="1"/>
        <end position="206"/>
    </location>
</feature>
<keyword id="KW-0687">Ribonucleoprotein</keyword>
<keyword id="KW-0689">Ribosomal protein</keyword>
<keyword id="KW-0694">RNA-binding</keyword>
<keyword id="KW-0699">rRNA-binding</keyword>
<protein>
    <recommendedName>
        <fullName evidence="1">Large ribosomal subunit protein uL4</fullName>
    </recommendedName>
    <alternativeName>
        <fullName evidence="2">50S ribosomal protein L4</fullName>
    </alternativeName>
</protein>
<name>RL4_RHOPS</name>
<comment type="function">
    <text evidence="1">One of the primary rRNA binding proteins, this protein initially binds near the 5'-end of the 23S rRNA. It is important during the early stages of 50S assembly. It makes multiple contacts with different domains of the 23S rRNA in the assembled 50S subunit and ribosome.</text>
</comment>
<comment type="function">
    <text evidence="1">Forms part of the polypeptide exit tunnel.</text>
</comment>
<comment type="subunit">
    <text evidence="1">Part of the 50S ribosomal subunit.</text>
</comment>
<comment type="similarity">
    <text evidence="1">Belongs to the universal ribosomal protein uL4 family.</text>
</comment>
<accession>Q134T0</accession>
<gene>
    <name evidence="1" type="primary">rplD</name>
    <name type="ordered locus">RPD_3183</name>
</gene>
<dbReference type="EMBL" id="CP000283">
    <property type="protein sequence ID" value="ABE40409.1"/>
    <property type="molecule type" value="Genomic_DNA"/>
</dbReference>
<dbReference type="SMR" id="Q134T0"/>
<dbReference type="STRING" id="316057.RPD_3183"/>
<dbReference type="KEGG" id="rpd:RPD_3183"/>
<dbReference type="eggNOG" id="COG0088">
    <property type="taxonomic scope" value="Bacteria"/>
</dbReference>
<dbReference type="HOGENOM" id="CLU_041575_5_1_5"/>
<dbReference type="BioCyc" id="RPAL316057:RPD_RS15980-MONOMER"/>
<dbReference type="Proteomes" id="UP000001818">
    <property type="component" value="Chromosome"/>
</dbReference>
<dbReference type="GO" id="GO:1990904">
    <property type="term" value="C:ribonucleoprotein complex"/>
    <property type="evidence" value="ECO:0007669"/>
    <property type="project" value="UniProtKB-KW"/>
</dbReference>
<dbReference type="GO" id="GO:0005840">
    <property type="term" value="C:ribosome"/>
    <property type="evidence" value="ECO:0007669"/>
    <property type="project" value="UniProtKB-KW"/>
</dbReference>
<dbReference type="GO" id="GO:0019843">
    <property type="term" value="F:rRNA binding"/>
    <property type="evidence" value="ECO:0007669"/>
    <property type="project" value="UniProtKB-UniRule"/>
</dbReference>
<dbReference type="GO" id="GO:0003735">
    <property type="term" value="F:structural constituent of ribosome"/>
    <property type="evidence" value="ECO:0007669"/>
    <property type="project" value="InterPro"/>
</dbReference>
<dbReference type="GO" id="GO:0006412">
    <property type="term" value="P:translation"/>
    <property type="evidence" value="ECO:0007669"/>
    <property type="project" value="UniProtKB-UniRule"/>
</dbReference>
<dbReference type="Gene3D" id="3.40.1370.10">
    <property type="match status" value="1"/>
</dbReference>
<dbReference type="HAMAP" id="MF_01328_B">
    <property type="entry name" value="Ribosomal_uL4_B"/>
    <property type="match status" value="1"/>
</dbReference>
<dbReference type="InterPro" id="IPR002136">
    <property type="entry name" value="Ribosomal_uL4"/>
</dbReference>
<dbReference type="InterPro" id="IPR013005">
    <property type="entry name" value="Ribosomal_uL4-like"/>
</dbReference>
<dbReference type="InterPro" id="IPR023574">
    <property type="entry name" value="Ribosomal_uL4_dom_sf"/>
</dbReference>
<dbReference type="NCBIfam" id="TIGR03953">
    <property type="entry name" value="rplD_bact"/>
    <property type="match status" value="1"/>
</dbReference>
<dbReference type="PANTHER" id="PTHR10746">
    <property type="entry name" value="50S RIBOSOMAL PROTEIN L4"/>
    <property type="match status" value="1"/>
</dbReference>
<dbReference type="PANTHER" id="PTHR10746:SF6">
    <property type="entry name" value="LARGE RIBOSOMAL SUBUNIT PROTEIN UL4M"/>
    <property type="match status" value="1"/>
</dbReference>
<dbReference type="Pfam" id="PF00573">
    <property type="entry name" value="Ribosomal_L4"/>
    <property type="match status" value="1"/>
</dbReference>
<dbReference type="SUPFAM" id="SSF52166">
    <property type="entry name" value="Ribosomal protein L4"/>
    <property type="match status" value="1"/>
</dbReference>
<proteinExistence type="inferred from homology"/>